<proteinExistence type="evidence at transcript level"/>
<keyword id="KW-1003">Cell membrane</keyword>
<keyword id="KW-0472">Membrane</keyword>
<keyword id="KW-1185">Reference proteome</keyword>
<keyword id="KW-0769">Symport</keyword>
<keyword id="KW-0812">Transmembrane</keyword>
<keyword id="KW-1133">Transmembrane helix</keyword>
<keyword id="KW-0813">Transport</keyword>
<feature type="chain" id="PRO_0000211397" description="Monocarboxylate transporter 4">
    <location>
        <begin position="1"/>
        <end position="473"/>
    </location>
</feature>
<feature type="topological domain" description="Cytoplasmic" evidence="3">
    <location>
        <begin position="1"/>
        <end position="17"/>
    </location>
</feature>
<feature type="transmembrane region" description="Helical" evidence="3">
    <location>
        <begin position="18"/>
        <end position="38"/>
    </location>
</feature>
<feature type="topological domain" description="Extracellular" evidence="3">
    <location>
        <begin position="39"/>
        <end position="61"/>
    </location>
</feature>
<feature type="transmembrane region" description="Helical" evidence="3">
    <location>
        <begin position="62"/>
        <end position="82"/>
    </location>
</feature>
<feature type="topological domain" description="Cytoplasmic" evidence="3">
    <location>
        <begin position="83"/>
        <end position="91"/>
    </location>
</feature>
<feature type="transmembrane region" description="Helical" evidence="3">
    <location>
        <begin position="92"/>
        <end position="112"/>
    </location>
</feature>
<feature type="topological domain" description="Extracellular" evidence="3">
    <location>
        <begin position="113"/>
        <end position="115"/>
    </location>
</feature>
<feature type="transmembrane region" description="Helical" evidence="3">
    <location>
        <begin position="116"/>
        <end position="136"/>
    </location>
</feature>
<feature type="topological domain" description="Cytoplasmic" evidence="3">
    <location>
        <begin position="137"/>
        <end position="149"/>
    </location>
</feature>
<feature type="transmembrane region" description="Helical" evidence="3">
    <location>
        <begin position="150"/>
        <end position="170"/>
    </location>
</feature>
<feature type="topological domain" description="Extracellular" evidence="3">
    <location>
        <begin position="171"/>
        <end position="179"/>
    </location>
</feature>
<feature type="transmembrane region" description="Helical" evidence="3">
    <location>
        <begin position="180"/>
        <end position="200"/>
    </location>
</feature>
<feature type="topological domain" description="Cytoplasmic" evidence="3">
    <location>
        <begin position="201"/>
        <end position="231"/>
    </location>
</feature>
<feature type="transmembrane region" description="Helical" evidence="3">
    <location>
        <begin position="232"/>
        <end position="252"/>
    </location>
</feature>
<feature type="topological domain" description="Extracellular" evidence="3">
    <location>
        <begin position="253"/>
        <end position="268"/>
    </location>
</feature>
<feature type="transmembrane region" description="Helical" evidence="3">
    <location>
        <begin position="269"/>
        <end position="289"/>
    </location>
</feature>
<feature type="topological domain" description="Cytoplasmic" evidence="3">
    <location>
        <begin position="290"/>
        <end position="297"/>
    </location>
</feature>
<feature type="transmembrane region" description="Helical" evidence="3">
    <location>
        <begin position="298"/>
        <end position="318"/>
    </location>
</feature>
<feature type="topological domain" description="Extracellular" evidence="3">
    <location>
        <begin position="319"/>
        <end position="321"/>
    </location>
</feature>
<feature type="transmembrane region" description="Helical" evidence="3">
    <location>
        <begin position="322"/>
        <end position="342"/>
    </location>
</feature>
<feature type="topological domain" description="Cytoplasmic" evidence="3">
    <location>
        <begin position="343"/>
        <end position="358"/>
    </location>
</feature>
<feature type="transmembrane region" description="Helical" evidence="3">
    <location>
        <begin position="359"/>
        <end position="379"/>
    </location>
</feature>
<feature type="topological domain" description="Extracellular" evidence="3">
    <location>
        <begin position="380"/>
        <end position="388"/>
    </location>
</feature>
<feature type="transmembrane region" description="Helical" evidence="3">
    <location>
        <begin position="389"/>
        <end position="409"/>
    </location>
</feature>
<feature type="topological domain" description="Cytoplasmic" evidence="3">
    <location>
        <begin position="410"/>
        <end position="473"/>
    </location>
</feature>
<feature type="region of interest" description="Disordered" evidence="4">
    <location>
        <begin position="421"/>
        <end position="447"/>
    </location>
</feature>
<feature type="region of interest" description="Basolateral sorting signal" evidence="1">
    <location>
        <begin position="427"/>
        <end position="449"/>
    </location>
</feature>
<feature type="region of interest" description="Basolateral sorting signal" evidence="1">
    <location>
        <begin position="449"/>
        <end position="473"/>
    </location>
</feature>
<feature type="sequence conflict" description="In Ref. 1; AAF67524." ref="1">
    <original>V</original>
    <variation>A</variation>
    <location>
        <position position="103"/>
    </location>
</feature>
<dbReference type="EMBL" id="AF204396">
    <property type="protein sequence ID" value="AAF67524.1"/>
    <property type="molecule type" value="mRNA"/>
</dbReference>
<dbReference type="EMBL" id="AF308452">
    <property type="protein sequence ID" value="AAG25703.1"/>
    <property type="molecule type" value="Genomic_DNA"/>
</dbReference>
<dbReference type="EMBL" id="AADN05000628">
    <property type="status" value="NOT_ANNOTATED_CDS"/>
    <property type="molecule type" value="Genomic_DNA"/>
</dbReference>
<dbReference type="RefSeq" id="NP_989994.2">
    <property type="nucleotide sequence ID" value="NM_204663.2"/>
</dbReference>
<dbReference type="RefSeq" id="XP_040505392.1">
    <property type="nucleotide sequence ID" value="XM_040649458.2"/>
</dbReference>
<dbReference type="RefSeq" id="XP_046785209.1">
    <property type="nucleotide sequence ID" value="XM_046929253.1"/>
</dbReference>
<dbReference type="SMR" id="P57788"/>
<dbReference type="FunCoup" id="P57788">
    <property type="interactions" value="163"/>
</dbReference>
<dbReference type="STRING" id="9031.ENSGALP00000004297"/>
<dbReference type="PaxDb" id="9031-ENSGALP00000004297"/>
<dbReference type="Ensembl" id="ENSGALT00010072201.1">
    <property type="protein sequence ID" value="ENSGALP00010044772.1"/>
    <property type="gene ID" value="ENSGALG00010029864.1"/>
</dbReference>
<dbReference type="GeneID" id="395383"/>
<dbReference type="KEGG" id="gga:395383"/>
<dbReference type="CTD" id="9123"/>
<dbReference type="VEuPathDB" id="HostDB:geneid_395383"/>
<dbReference type="eggNOG" id="KOG2504">
    <property type="taxonomic scope" value="Eukaryota"/>
</dbReference>
<dbReference type="GeneTree" id="ENSGT00940000158181"/>
<dbReference type="HOGENOM" id="CLU_001265_59_1_1"/>
<dbReference type="InParanoid" id="P57788"/>
<dbReference type="OMA" id="NWAVTRI"/>
<dbReference type="OrthoDB" id="6499973at2759"/>
<dbReference type="PhylomeDB" id="P57788"/>
<dbReference type="TreeFam" id="TF313792"/>
<dbReference type="Reactome" id="R-GGA-210991">
    <property type="pathway name" value="Basigin interactions"/>
</dbReference>
<dbReference type="Reactome" id="R-GGA-373920">
    <property type="pathway name" value="Pyruvate metabolism"/>
</dbReference>
<dbReference type="Reactome" id="R-GGA-433692">
    <property type="pathway name" value="Proton-coupled monocarboxylate transport"/>
</dbReference>
<dbReference type="PRO" id="PR:P57788"/>
<dbReference type="Proteomes" id="UP000000539">
    <property type="component" value="Chromosome 18"/>
</dbReference>
<dbReference type="Bgee" id="ENSGALG00000002728">
    <property type="expression patterns" value="Expressed in granulocyte and 11 other cell types or tissues"/>
</dbReference>
<dbReference type="GO" id="GO:0016324">
    <property type="term" value="C:apical plasma membrane"/>
    <property type="evidence" value="ECO:0007669"/>
    <property type="project" value="Ensembl"/>
</dbReference>
<dbReference type="GO" id="GO:0016323">
    <property type="term" value="C:basolateral plasma membrane"/>
    <property type="evidence" value="ECO:0000250"/>
    <property type="project" value="UniProtKB"/>
</dbReference>
<dbReference type="GO" id="GO:0016328">
    <property type="term" value="C:lateral plasma membrane"/>
    <property type="evidence" value="ECO:0007669"/>
    <property type="project" value="Ensembl"/>
</dbReference>
<dbReference type="GO" id="GO:0031965">
    <property type="term" value="C:nuclear membrane"/>
    <property type="evidence" value="ECO:0007669"/>
    <property type="project" value="Ensembl"/>
</dbReference>
<dbReference type="GO" id="GO:0005886">
    <property type="term" value="C:plasma membrane"/>
    <property type="evidence" value="ECO:0000250"/>
    <property type="project" value="UniProtKB"/>
</dbReference>
<dbReference type="GO" id="GO:0015650">
    <property type="term" value="F:lactate:proton symporter activity"/>
    <property type="evidence" value="ECO:0000250"/>
    <property type="project" value="UniProtKB"/>
</dbReference>
<dbReference type="GO" id="GO:0050833">
    <property type="term" value="F:pyruvate transmembrane transporter activity"/>
    <property type="evidence" value="ECO:0000250"/>
    <property type="project" value="UniProtKB"/>
</dbReference>
<dbReference type="GO" id="GO:0035873">
    <property type="term" value="P:lactate transmembrane transport"/>
    <property type="evidence" value="ECO:0000250"/>
    <property type="project" value="UniProtKB"/>
</dbReference>
<dbReference type="GO" id="GO:0042867">
    <property type="term" value="P:pyruvate catabolic process"/>
    <property type="evidence" value="ECO:0007669"/>
    <property type="project" value="Ensembl"/>
</dbReference>
<dbReference type="GO" id="GO:1901475">
    <property type="term" value="P:pyruvate transmembrane transport"/>
    <property type="evidence" value="ECO:0000250"/>
    <property type="project" value="UniProtKB"/>
</dbReference>
<dbReference type="CDD" id="cd17430">
    <property type="entry name" value="MFS_MCT3_4"/>
    <property type="match status" value="1"/>
</dbReference>
<dbReference type="FunFam" id="1.20.1250.20:FF:000077">
    <property type="entry name" value="Proton-coupled monocarboxylate transporter 3"/>
    <property type="match status" value="1"/>
</dbReference>
<dbReference type="Gene3D" id="1.20.1250.20">
    <property type="entry name" value="MFS general substrate transporter like domains"/>
    <property type="match status" value="1"/>
</dbReference>
<dbReference type="InterPro" id="IPR004743">
    <property type="entry name" value="MCT"/>
</dbReference>
<dbReference type="InterPro" id="IPR011701">
    <property type="entry name" value="MFS"/>
</dbReference>
<dbReference type="InterPro" id="IPR020846">
    <property type="entry name" value="MFS_dom"/>
</dbReference>
<dbReference type="InterPro" id="IPR036259">
    <property type="entry name" value="MFS_trans_sf"/>
</dbReference>
<dbReference type="InterPro" id="IPR050327">
    <property type="entry name" value="Proton-linked_MCT"/>
</dbReference>
<dbReference type="NCBIfam" id="TIGR00892">
    <property type="entry name" value="2A0113"/>
    <property type="match status" value="1"/>
</dbReference>
<dbReference type="PANTHER" id="PTHR11360">
    <property type="entry name" value="MONOCARBOXYLATE TRANSPORTER"/>
    <property type="match status" value="1"/>
</dbReference>
<dbReference type="PANTHER" id="PTHR11360:SF27">
    <property type="entry name" value="MONOCARBOXYLATE TRANSPORTER 4"/>
    <property type="match status" value="1"/>
</dbReference>
<dbReference type="Pfam" id="PF07690">
    <property type="entry name" value="MFS_1"/>
    <property type="match status" value="1"/>
</dbReference>
<dbReference type="SUPFAM" id="SSF103473">
    <property type="entry name" value="MFS general substrate transporter"/>
    <property type="match status" value="1"/>
</dbReference>
<dbReference type="PROSITE" id="PS50850">
    <property type="entry name" value="MFS"/>
    <property type="match status" value="1"/>
</dbReference>
<protein>
    <recommendedName>
        <fullName>Monocarboxylate transporter 4</fullName>
        <shortName>MCT 4</shortName>
    </recommendedName>
    <alternativeName>
        <fullName>Solute carrier family 16 member 3</fullName>
    </alternativeName>
</protein>
<reference key="1">
    <citation type="submission" date="2000-09" db="EMBL/GenBank/DDBJ databases">
        <title>Characterization of the chicken and mouse MCT4 genes: tissue distribution and relationship to other monocarboxylate transporters.</title>
        <authorList>
            <person name="Yoon H."/>
            <person name="Philp N."/>
        </authorList>
    </citation>
    <scope>NUCLEOTIDE SEQUENCE [GENOMIC DNA / MRNA]</scope>
</reference>
<reference key="2">
    <citation type="journal article" date="2004" name="Nature">
        <title>Sequence and comparative analysis of the chicken genome provide unique perspectives on vertebrate evolution.</title>
        <authorList>
            <person name="Hillier L.W."/>
            <person name="Miller W."/>
            <person name="Birney E."/>
            <person name="Warren W."/>
            <person name="Hardison R.C."/>
            <person name="Ponting C.P."/>
            <person name="Bork P."/>
            <person name="Burt D.W."/>
            <person name="Groenen M.A.M."/>
            <person name="Delany M.E."/>
            <person name="Dodgson J.B."/>
            <person name="Chinwalla A.T."/>
            <person name="Cliften P.F."/>
            <person name="Clifton S.W."/>
            <person name="Delehaunty K.D."/>
            <person name="Fronick C."/>
            <person name="Fulton R.S."/>
            <person name="Graves T.A."/>
            <person name="Kremitzki C."/>
            <person name="Layman D."/>
            <person name="Magrini V."/>
            <person name="McPherson J.D."/>
            <person name="Miner T.L."/>
            <person name="Minx P."/>
            <person name="Nash W.E."/>
            <person name="Nhan M.N."/>
            <person name="Nelson J.O."/>
            <person name="Oddy L.G."/>
            <person name="Pohl C.S."/>
            <person name="Randall-Maher J."/>
            <person name="Smith S.M."/>
            <person name="Wallis J.W."/>
            <person name="Yang S.-P."/>
            <person name="Romanov M.N."/>
            <person name="Rondelli C.M."/>
            <person name="Paton B."/>
            <person name="Smith J."/>
            <person name="Morrice D."/>
            <person name="Daniels L."/>
            <person name="Tempest H.G."/>
            <person name="Robertson L."/>
            <person name="Masabanda J.S."/>
            <person name="Griffin D.K."/>
            <person name="Vignal A."/>
            <person name="Fillon V."/>
            <person name="Jacobbson L."/>
            <person name="Kerje S."/>
            <person name="Andersson L."/>
            <person name="Crooijmans R.P."/>
            <person name="Aerts J."/>
            <person name="van der Poel J.J."/>
            <person name="Ellegren H."/>
            <person name="Caldwell R.B."/>
            <person name="Hubbard S.J."/>
            <person name="Grafham D.V."/>
            <person name="Kierzek A.M."/>
            <person name="McLaren S.R."/>
            <person name="Overton I.M."/>
            <person name="Arakawa H."/>
            <person name="Beattie K.J."/>
            <person name="Bezzubov Y."/>
            <person name="Boardman P.E."/>
            <person name="Bonfield J.K."/>
            <person name="Croning M.D.R."/>
            <person name="Davies R.M."/>
            <person name="Francis M.D."/>
            <person name="Humphray S.J."/>
            <person name="Scott C.E."/>
            <person name="Taylor R.G."/>
            <person name="Tickle C."/>
            <person name="Brown W.R.A."/>
            <person name="Rogers J."/>
            <person name="Buerstedde J.-M."/>
            <person name="Wilson S.A."/>
            <person name="Stubbs L."/>
            <person name="Ovcharenko I."/>
            <person name="Gordon L."/>
            <person name="Lucas S."/>
            <person name="Miller M.M."/>
            <person name="Inoko H."/>
            <person name="Shiina T."/>
            <person name="Kaufman J."/>
            <person name="Salomonsen J."/>
            <person name="Skjoedt K."/>
            <person name="Wong G.K.-S."/>
            <person name="Wang J."/>
            <person name="Liu B."/>
            <person name="Wang J."/>
            <person name="Yu J."/>
            <person name="Yang H."/>
            <person name="Nefedov M."/>
            <person name="Koriabine M."/>
            <person name="Dejong P.J."/>
            <person name="Goodstadt L."/>
            <person name="Webber C."/>
            <person name="Dickens N.J."/>
            <person name="Letunic I."/>
            <person name="Suyama M."/>
            <person name="Torrents D."/>
            <person name="von Mering C."/>
            <person name="Zdobnov E.M."/>
            <person name="Makova K."/>
            <person name="Nekrutenko A."/>
            <person name="Elnitski L."/>
            <person name="Eswara P."/>
            <person name="King D.C."/>
            <person name="Yang S.-P."/>
            <person name="Tyekucheva S."/>
            <person name="Radakrishnan A."/>
            <person name="Harris R.S."/>
            <person name="Chiaromonte F."/>
            <person name="Taylor J."/>
            <person name="He J."/>
            <person name="Rijnkels M."/>
            <person name="Griffiths-Jones S."/>
            <person name="Ureta-Vidal A."/>
            <person name="Hoffman M.M."/>
            <person name="Severin J."/>
            <person name="Searle S.M.J."/>
            <person name="Law A.S."/>
            <person name="Speed D."/>
            <person name="Waddington D."/>
            <person name="Cheng Z."/>
            <person name="Tuzun E."/>
            <person name="Eichler E."/>
            <person name="Bao Z."/>
            <person name="Flicek P."/>
            <person name="Shteynberg D.D."/>
            <person name="Brent M.R."/>
            <person name="Bye J.M."/>
            <person name="Huckle E.J."/>
            <person name="Chatterji S."/>
            <person name="Dewey C."/>
            <person name="Pachter L."/>
            <person name="Kouranov A."/>
            <person name="Mourelatos Z."/>
            <person name="Hatzigeorgiou A.G."/>
            <person name="Paterson A.H."/>
            <person name="Ivarie R."/>
            <person name="Brandstrom M."/>
            <person name="Axelsson E."/>
            <person name="Backstrom N."/>
            <person name="Berlin S."/>
            <person name="Webster M.T."/>
            <person name="Pourquie O."/>
            <person name="Reymond A."/>
            <person name="Ucla C."/>
            <person name="Antonarakis S.E."/>
            <person name="Long M."/>
            <person name="Emerson J.J."/>
            <person name="Betran E."/>
            <person name="Dupanloup I."/>
            <person name="Kaessmann H."/>
            <person name="Hinrichs A.S."/>
            <person name="Bejerano G."/>
            <person name="Furey T.S."/>
            <person name="Harte R.A."/>
            <person name="Raney B."/>
            <person name="Siepel A."/>
            <person name="Kent W.J."/>
            <person name="Haussler D."/>
            <person name="Eyras E."/>
            <person name="Castelo R."/>
            <person name="Abril J.F."/>
            <person name="Castellano S."/>
            <person name="Camara F."/>
            <person name="Parra G."/>
            <person name="Guigo R."/>
            <person name="Bourque G."/>
            <person name="Tesler G."/>
            <person name="Pevzner P.A."/>
            <person name="Smit A."/>
            <person name="Fulton L.A."/>
            <person name="Mardis E.R."/>
            <person name="Wilson R.K."/>
        </authorList>
    </citation>
    <scope>NUCLEOTIDE SEQUENCE [LARGE SCALE GENOMIC DNA]</scope>
    <source>
        <strain>Red jungle fowl</strain>
    </source>
</reference>
<organism>
    <name type="scientific">Gallus gallus</name>
    <name type="common">Chicken</name>
    <dbReference type="NCBI Taxonomy" id="9031"/>
    <lineage>
        <taxon>Eukaryota</taxon>
        <taxon>Metazoa</taxon>
        <taxon>Chordata</taxon>
        <taxon>Craniata</taxon>
        <taxon>Vertebrata</taxon>
        <taxon>Euteleostomi</taxon>
        <taxon>Archelosauria</taxon>
        <taxon>Archosauria</taxon>
        <taxon>Dinosauria</taxon>
        <taxon>Saurischia</taxon>
        <taxon>Theropoda</taxon>
        <taxon>Coelurosauria</taxon>
        <taxon>Aves</taxon>
        <taxon>Neognathae</taxon>
        <taxon>Galloanserae</taxon>
        <taxon>Galliformes</taxon>
        <taxon>Phasianidae</taxon>
        <taxon>Phasianinae</taxon>
        <taxon>Gallus</taxon>
    </lineage>
</organism>
<sequence>MGAVVVDDGPSGVKAPDGGWGWAVLFGCFIITGFSYAFPKAVSVFFKELIREFGVGYSDTAWISSILLAMLYGTGPLCSVCVNRFGCRPVMLVGGLFASMGMVIASFCTSIVQIYLTAGVITGLGLALNFQPSLIMLNRYFDKRRPLANGLSAAGSPVFLCALSPLGQILQHEYGWRGGFLILGGMLLNCCVCGALMRPLEPPKKSEATKEPAEKKAKKKLLDFSVFKDGGFVIYTLAASIMVLGLFVPPVFVVSYAKDLGYQDTKAAFLLTILGFIDIFARPICGMVAGLKWVRPRCVYLFSFAMIFNGFTDLMGSMSVDYGGLVVFCIFFGISYGMVGALQFEVLMAIVGTQKFSSAIGLVLLAEAMAVLIGPPSAGKLLDLTRRYMFVFIIAGIEVTTSALVLALGNFFCIKKKPAEPHTKEAAAEREELNKSEDKTPEDAKVDSIEVEQFLKDEPEKNGEVVTNPETCV</sequence>
<evidence type="ECO:0000250" key="1">
    <source>
        <dbReference type="UniProtKB" id="O15427"/>
    </source>
</evidence>
<evidence type="ECO:0000250" key="2">
    <source>
        <dbReference type="UniProtKB" id="O35910"/>
    </source>
</evidence>
<evidence type="ECO:0000255" key="3"/>
<evidence type="ECO:0000256" key="4">
    <source>
        <dbReference type="SAM" id="MobiDB-lite"/>
    </source>
</evidence>
<evidence type="ECO:0000305" key="5"/>
<accession>P57788</accession>
<accession>A0A0C3SFZ3</accession>
<accession>Q9DEY5</accession>
<accession>Q9DG24</accession>
<name>MOT4_CHICK</name>
<comment type="function">
    <text evidence="1 2">Proton-dependent transporter of monocarboxylates such as L-lactate and pyruvate (By similarity). Plays a predominant role in the L-lactate efflux from highly glycolytic cells (By similarity).</text>
</comment>
<comment type="catalytic activity">
    <reaction evidence="1">
        <text>(S)-lactate(in) + H(+)(in) = (S)-lactate(out) + H(+)(out)</text>
        <dbReference type="Rhea" id="RHEA:29415"/>
        <dbReference type="ChEBI" id="CHEBI:15378"/>
        <dbReference type="ChEBI" id="CHEBI:16651"/>
    </reaction>
    <physiologicalReaction direction="left-to-right" evidence="1">
        <dbReference type="Rhea" id="RHEA:29416"/>
    </physiologicalReaction>
    <physiologicalReaction direction="right-to-left" evidence="1">
        <dbReference type="Rhea" id="RHEA:29417"/>
    </physiologicalReaction>
</comment>
<comment type="catalytic activity">
    <reaction evidence="1">
        <text>pyruvate(out) + H(+)(out) = pyruvate(in) + H(+)(in)</text>
        <dbReference type="Rhea" id="RHEA:64720"/>
        <dbReference type="ChEBI" id="CHEBI:15361"/>
        <dbReference type="ChEBI" id="CHEBI:15378"/>
    </reaction>
</comment>
<comment type="subunit">
    <text evidence="1">Interacts with BSG; interaction mediates SLC16A3 targeting to the plasma membrane.</text>
</comment>
<comment type="subcellular location">
    <subcellularLocation>
        <location evidence="1">Cell membrane</location>
        <topology evidence="3">Multi-pass membrane protein</topology>
    </subcellularLocation>
    <subcellularLocation>
        <location evidence="1">Basolateral cell membrane</location>
        <topology evidence="3">Multi-pass membrane protein</topology>
    </subcellularLocation>
    <text evidence="1">Plasma membrane localization is dependent upon the BSG/MCT4 interaction. Basolateral sorting signals (BLSS) in C-terminal cytoplasmic tail ensure its basolateral expression in polarised epithelial cells.</text>
</comment>
<comment type="domain">
    <text evidence="1">Two basolateral sorting signals (BSS) in its C-terminal cytoplasmic tail are required to direct SLC16A3 to the basolateral membrane.</text>
</comment>
<comment type="similarity">
    <text evidence="5">Belongs to the major facilitator superfamily. Monocarboxylate porter (TC 2.A.1.13) family.</text>
</comment>
<comment type="caution">
    <text evidence="1">Was initially thought to be considered to be a low affinity lactate transporter with negligible affinity for pyruvate (By similarity). However, it was later shown that SLC16A3 is a high affinity lactate transporter with physiologically relevant affinity for pyruvate (By similarity).</text>
</comment>
<gene>
    <name type="primary">SLC16A3</name>
    <name type="synonym">MCT4</name>
</gene>